<gene>
    <name evidence="1" type="primary">hmd</name>
    <name type="ordered locus">MmarC5_1551</name>
</gene>
<sequence>MKVAILGAGCYRTHAASGITNFSRAAQVAKEVGIPEITMTHSTITMGAELLHLIPEITEVVVSDPCFAEEPGIVVLDQFDYKTVMEAHLAGDAEKVMPEIREAVKAKAKETPKPPKGCIHFVHPETIGLKVTASDVEAVKNADIVITWLPKGGSQPAIIEKFVGAIKKGAIVTHACTIPTPKFAKIFKDMGRDDLNIIAYHPGAVPEMKGQAFLSEGLADAEKVEEFYCMAKTARGEAFKMPANLISPVCDMGSAVTAPVYAGILAYRDAVTQILGAPADFAQMMADEAITQLLELMRSEGIKNMEDKLNPKALTGTADSMCFGPLADILPTSLKVLEKHTNENKCECSCSIKP</sequence>
<reference key="1">
    <citation type="submission" date="2007-03" db="EMBL/GenBank/DDBJ databases">
        <title>Complete sequence of chromosome of Methanococcus maripaludis C5.</title>
        <authorList>
            <consortium name="US DOE Joint Genome Institute"/>
            <person name="Copeland A."/>
            <person name="Lucas S."/>
            <person name="Lapidus A."/>
            <person name="Barry K."/>
            <person name="Glavina del Rio T."/>
            <person name="Dalin E."/>
            <person name="Tice H."/>
            <person name="Pitluck S."/>
            <person name="Chertkov O."/>
            <person name="Brettin T."/>
            <person name="Bruce D."/>
            <person name="Han C."/>
            <person name="Detter J.C."/>
            <person name="Schmutz J."/>
            <person name="Larimer F."/>
            <person name="Land M."/>
            <person name="Hauser L."/>
            <person name="Kyrpides N."/>
            <person name="Mikhailova N."/>
            <person name="Sieprawska-Lupa M."/>
            <person name="Whitman W.B."/>
            <person name="Richardson P."/>
        </authorList>
    </citation>
    <scope>NUCLEOTIDE SEQUENCE [LARGE SCALE GENOMIC DNA]</scope>
    <source>
        <strain>C5 / ATCC BAA-1333</strain>
    </source>
</reference>
<protein>
    <recommendedName>
        <fullName evidence="1">5,10-methenyltetrahydromethanopterin hydrogenase</fullName>
        <ecNumber evidence="1">1.12.98.2</ecNumber>
    </recommendedName>
    <alternativeName>
        <fullName evidence="1">H(2)-dependent methylene-H(4)MPT dehydrogenase</fullName>
    </alternativeName>
    <alternativeName>
        <fullName evidence="1">H(2)-forming N(5),N(10)-methylenetetrahydromethanopterin dehydrogenase</fullName>
    </alternativeName>
    <alternativeName>
        <fullName evidence="1">N(5),N(10)-methenyltetrahydromethanopterin hydrogenase</fullName>
    </alternativeName>
</protein>
<evidence type="ECO:0000255" key="1">
    <source>
        <dbReference type="HAMAP-Rule" id="MF_01090"/>
    </source>
</evidence>
<dbReference type="EC" id="1.12.98.2" evidence="1"/>
<dbReference type="EMBL" id="CP000609">
    <property type="protein sequence ID" value="ABO35848.1"/>
    <property type="molecule type" value="Genomic_DNA"/>
</dbReference>
<dbReference type="RefSeq" id="WP_011869295.1">
    <property type="nucleotide sequence ID" value="NC_009135.1"/>
</dbReference>
<dbReference type="SMR" id="A4G064"/>
<dbReference type="STRING" id="402880.MmarC5_1551"/>
<dbReference type="GeneID" id="4929076"/>
<dbReference type="KEGG" id="mmq:MmarC5_1551"/>
<dbReference type="eggNOG" id="arCOG03196">
    <property type="taxonomic scope" value="Archaea"/>
</dbReference>
<dbReference type="HOGENOM" id="CLU_772960_0_0_2"/>
<dbReference type="OrthoDB" id="113982at2157"/>
<dbReference type="UniPathway" id="UPA00640">
    <property type="reaction ID" value="UER00696"/>
</dbReference>
<dbReference type="Proteomes" id="UP000000253">
    <property type="component" value="Chromosome"/>
</dbReference>
<dbReference type="GO" id="GO:0047068">
    <property type="term" value="F:N5,N10-methenyltetrahydromethanopterin hydrogenase activity"/>
    <property type="evidence" value="ECO:0007669"/>
    <property type="project" value="UniProtKB-UniRule"/>
</dbReference>
<dbReference type="GO" id="GO:0004735">
    <property type="term" value="F:pyrroline-5-carboxylate reductase activity"/>
    <property type="evidence" value="ECO:0007669"/>
    <property type="project" value="TreeGrafter"/>
</dbReference>
<dbReference type="GO" id="GO:0055129">
    <property type="term" value="P:L-proline biosynthetic process"/>
    <property type="evidence" value="ECO:0007669"/>
    <property type="project" value="TreeGrafter"/>
</dbReference>
<dbReference type="GO" id="GO:0019386">
    <property type="term" value="P:methanogenesis, from carbon dioxide"/>
    <property type="evidence" value="ECO:0007669"/>
    <property type="project" value="UniProtKB-UniRule"/>
</dbReference>
<dbReference type="GO" id="GO:0006730">
    <property type="term" value="P:one-carbon metabolic process"/>
    <property type="evidence" value="ECO:0007669"/>
    <property type="project" value="UniProtKB-UniRule"/>
</dbReference>
<dbReference type="Gene3D" id="1.20.120.1300">
    <property type="entry name" value="Hmd, C-terminal helical subdomain"/>
    <property type="match status" value="1"/>
</dbReference>
<dbReference type="Gene3D" id="3.40.50.720">
    <property type="entry name" value="NAD(P)-binding Rossmann-like Domain"/>
    <property type="match status" value="1"/>
</dbReference>
<dbReference type="HAMAP" id="MF_01090">
    <property type="entry name" value="HMD"/>
    <property type="match status" value="1"/>
</dbReference>
<dbReference type="InterPro" id="IPR008927">
    <property type="entry name" value="6-PGluconate_DH-like_C_sf"/>
</dbReference>
<dbReference type="InterPro" id="IPR010062">
    <property type="entry name" value="HMD"/>
</dbReference>
<dbReference type="InterPro" id="IPR004889">
    <property type="entry name" value="HMD_C"/>
</dbReference>
<dbReference type="InterPro" id="IPR038182">
    <property type="entry name" value="HMD_C_sf"/>
</dbReference>
<dbReference type="InterPro" id="IPR055205">
    <property type="entry name" value="HMD_N"/>
</dbReference>
<dbReference type="InterPro" id="IPR024190">
    <property type="entry name" value="METHMP_Hmd"/>
</dbReference>
<dbReference type="InterPro" id="IPR036291">
    <property type="entry name" value="NAD(P)-bd_dom_sf"/>
</dbReference>
<dbReference type="NCBIfam" id="TIGR01723">
    <property type="entry name" value="hmd_TIGR"/>
    <property type="match status" value="1"/>
</dbReference>
<dbReference type="PANTHER" id="PTHR11645">
    <property type="entry name" value="PYRROLINE-5-CARBOXYLATE REDUCTASE"/>
    <property type="match status" value="1"/>
</dbReference>
<dbReference type="PANTHER" id="PTHR11645:SF0">
    <property type="entry name" value="PYRROLINE-5-CARBOXYLATE REDUCTASE 3"/>
    <property type="match status" value="1"/>
</dbReference>
<dbReference type="Pfam" id="PF03201">
    <property type="entry name" value="HMD"/>
    <property type="match status" value="1"/>
</dbReference>
<dbReference type="Pfam" id="PF22616">
    <property type="entry name" value="HMD_N"/>
    <property type="match status" value="1"/>
</dbReference>
<dbReference type="PIRSF" id="PIRSF016158">
    <property type="entry name" value="HMD"/>
    <property type="match status" value="1"/>
</dbReference>
<dbReference type="PIRSF" id="PIRSF500165">
    <property type="entry name" value="HMDI"/>
    <property type="match status" value="1"/>
</dbReference>
<dbReference type="SUPFAM" id="SSF48179">
    <property type="entry name" value="6-phosphogluconate dehydrogenase C-terminal domain-like"/>
    <property type="match status" value="1"/>
</dbReference>
<dbReference type="SUPFAM" id="SSF51735">
    <property type="entry name" value="NAD(P)-binding Rossmann-fold domains"/>
    <property type="match status" value="1"/>
</dbReference>
<accession>A4G064</accession>
<organism>
    <name type="scientific">Methanococcus maripaludis (strain C5 / ATCC BAA-1333)</name>
    <dbReference type="NCBI Taxonomy" id="402880"/>
    <lineage>
        <taxon>Archaea</taxon>
        <taxon>Methanobacteriati</taxon>
        <taxon>Methanobacteriota</taxon>
        <taxon>Methanomada group</taxon>
        <taxon>Methanococci</taxon>
        <taxon>Methanococcales</taxon>
        <taxon>Methanococcaceae</taxon>
        <taxon>Methanococcus</taxon>
    </lineage>
</organism>
<keyword id="KW-0484">Methanogenesis</keyword>
<keyword id="KW-0554">One-carbon metabolism</keyword>
<keyword id="KW-0560">Oxidoreductase</keyword>
<comment type="function">
    <text evidence="1">Catalyzes the reversible reduction of methenyl-H(4)MPT(+) to methylene-H(4)MPT.</text>
</comment>
<comment type="catalytic activity">
    <reaction evidence="1">
        <text>5,10-methenyl-5,6,7,8-tetrahydromethanopterin + H2 = 5,10-methylenetetrahydromethanopterin + H(+)</text>
        <dbReference type="Rhea" id="RHEA:20017"/>
        <dbReference type="ChEBI" id="CHEBI:15378"/>
        <dbReference type="ChEBI" id="CHEBI:18276"/>
        <dbReference type="ChEBI" id="CHEBI:57818"/>
        <dbReference type="ChEBI" id="CHEBI:58337"/>
        <dbReference type="EC" id="1.12.98.2"/>
    </reaction>
</comment>
<comment type="pathway">
    <text evidence="1">One-carbon metabolism; methanogenesis from CO(2); 5,10-methylene-5,6,7,8-tetrahydromethanopterin from 5,10-methenyl-5,6,7,8-tetrahydromethanopterin (hydrogen route): step 1/1.</text>
</comment>
<comment type="similarity">
    <text evidence="1">Belongs to the HMD family.</text>
</comment>
<proteinExistence type="inferred from homology"/>
<feature type="chain" id="PRO_1000149884" description="5,10-methenyltetrahydromethanopterin hydrogenase">
    <location>
        <begin position="1"/>
        <end position="354"/>
    </location>
</feature>
<name>HMD_METM5</name>